<reference key="1">
    <citation type="submission" date="2003-08" db="EMBL/GenBank/DDBJ databases">
        <title>Cloning of a new isoform of KIAA2007 protein in testis.</title>
        <authorList>
            <person name="Lu L."/>
            <person name="Huang X.Y."/>
            <person name="Yin L.L."/>
            <person name="Xu M."/>
            <person name="Li J.M."/>
            <person name="Zhou Z.M."/>
            <person name="Sha J.H."/>
        </authorList>
    </citation>
    <scope>NUCLEOTIDE SEQUENCE [MRNA]</scope>
    <source>
        <tissue>Testis</tissue>
    </source>
</reference>
<reference key="2">
    <citation type="submission" date="2002-11" db="EMBL/GenBank/DDBJ databases">
        <title>The nucleotide sequence of a long cDNA clone isolated from human.</title>
        <authorList>
            <person name="Nagase T."/>
            <person name="Kikuno R."/>
            <person name="Ohara O."/>
        </authorList>
    </citation>
    <scope>NUCLEOTIDE SEQUENCE [LARGE SCALE MRNA]</scope>
    <source>
        <tissue>Brain</tissue>
    </source>
</reference>
<reference key="3">
    <citation type="journal article" date="2004" name="Genome Res.">
        <title>The status, quality, and expansion of the NIH full-length cDNA project: the Mammalian Gene Collection (MGC).</title>
        <authorList>
            <consortium name="The MGC Project Team"/>
        </authorList>
    </citation>
    <scope>NUCLEOTIDE SEQUENCE [LARGE SCALE MRNA]</scope>
    <source>
        <tissue>Brain</tissue>
        <tissue>Embryonic stem cell</tissue>
        <tissue>Eye</tissue>
        <tissue>Skin</tissue>
    </source>
</reference>
<reference key="4">
    <citation type="journal article" date="2004" name="Nat. Genet.">
        <title>Complete sequencing and characterization of 21,243 full-length human cDNAs.</title>
        <authorList>
            <person name="Ota T."/>
            <person name="Suzuki Y."/>
            <person name="Nishikawa T."/>
            <person name="Otsuki T."/>
            <person name="Sugiyama T."/>
            <person name="Irie R."/>
            <person name="Wakamatsu A."/>
            <person name="Hayashi K."/>
            <person name="Sato H."/>
            <person name="Nagai K."/>
            <person name="Kimura K."/>
            <person name="Makita H."/>
            <person name="Sekine M."/>
            <person name="Obayashi M."/>
            <person name="Nishi T."/>
            <person name="Shibahara T."/>
            <person name="Tanaka T."/>
            <person name="Ishii S."/>
            <person name="Yamamoto J."/>
            <person name="Saito K."/>
            <person name="Kawai Y."/>
            <person name="Isono Y."/>
            <person name="Nakamura Y."/>
            <person name="Nagahari K."/>
            <person name="Murakami K."/>
            <person name="Yasuda T."/>
            <person name="Iwayanagi T."/>
            <person name="Wagatsuma M."/>
            <person name="Shiratori A."/>
            <person name="Sudo H."/>
            <person name="Hosoiri T."/>
            <person name="Kaku Y."/>
            <person name="Kodaira H."/>
            <person name="Kondo H."/>
            <person name="Sugawara M."/>
            <person name="Takahashi M."/>
            <person name="Kanda K."/>
            <person name="Yokoi T."/>
            <person name="Furuya T."/>
            <person name="Kikkawa E."/>
            <person name="Omura Y."/>
            <person name="Abe K."/>
            <person name="Kamihara K."/>
            <person name="Katsuta N."/>
            <person name="Sato K."/>
            <person name="Tanikawa M."/>
            <person name="Yamazaki M."/>
            <person name="Ninomiya K."/>
            <person name="Ishibashi T."/>
            <person name="Yamashita H."/>
            <person name="Murakawa K."/>
            <person name="Fujimori K."/>
            <person name="Tanai H."/>
            <person name="Kimata M."/>
            <person name="Watanabe M."/>
            <person name="Hiraoka S."/>
            <person name="Chiba Y."/>
            <person name="Ishida S."/>
            <person name="Ono Y."/>
            <person name="Takiguchi S."/>
            <person name="Watanabe S."/>
            <person name="Yosida M."/>
            <person name="Hotuta T."/>
            <person name="Kusano J."/>
            <person name="Kanehori K."/>
            <person name="Takahashi-Fujii A."/>
            <person name="Hara H."/>
            <person name="Tanase T.-O."/>
            <person name="Nomura Y."/>
            <person name="Togiya S."/>
            <person name="Komai F."/>
            <person name="Hara R."/>
            <person name="Takeuchi K."/>
            <person name="Arita M."/>
            <person name="Imose N."/>
            <person name="Musashino K."/>
            <person name="Yuuki H."/>
            <person name="Oshima A."/>
            <person name="Sasaki N."/>
            <person name="Aotsuka S."/>
            <person name="Yoshikawa Y."/>
            <person name="Matsunawa H."/>
            <person name="Ichihara T."/>
            <person name="Shiohata N."/>
            <person name="Sano S."/>
            <person name="Moriya S."/>
            <person name="Momiyama H."/>
            <person name="Satoh N."/>
            <person name="Takami S."/>
            <person name="Terashima Y."/>
            <person name="Suzuki O."/>
            <person name="Nakagawa S."/>
            <person name="Senoh A."/>
            <person name="Mizoguchi H."/>
            <person name="Goto Y."/>
            <person name="Shimizu F."/>
            <person name="Wakebe H."/>
            <person name="Hishigaki H."/>
            <person name="Watanabe T."/>
            <person name="Sugiyama A."/>
            <person name="Takemoto M."/>
            <person name="Kawakami B."/>
            <person name="Yamazaki M."/>
            <person name="Watanabe K."/>
            <person name="Kumagai A."/>
            <person name="Itakura S."/>
            <person name="Fukuzumi Y."/>
            <person name="Fujimori Y."/>
            <person name="Komiyama M."/>
            <person name="Tashiro H."/>
            <person name="Tanigami A."/>
            <person name="Fujiwara T."/>
            <person name="Ono T."/>
            <person name="Yamada K."/>
            <person name="Fujii Y."/>
            <person name="Ozaki K."/>
            <person name="Hirao M."/>
            <person name="Ohmori Y."/>
            <person name="Kawabata A."/>
            <person name="Hikiji T."/>
            <person name="Kobatake N."/>
            <person name="Inagaki H."/>
            <person name="Ikema Y."/>
            <person name="Okamoto S."/>
            <person name="Okitani R."/>
            <person name="Kawakami T."/>
            <person name="Noguchi S."/>
            <person name="Itoh T."/>
            <person name="Shigeta K."/>
            <person name="Senba T."/>
            <person name="Matsumura K."/>
            <person name="Nakajima Y."/>
            <person name="Mizuno T."/>
            <person name="Morinaga M."/>
            <person name="Sasaki M."/>
            <person name="Togashi T."/>
            <person name="Oyama M."/>
            <person name="Hata H."/>
            <person name="Watanabe M."/>
            <person name="Komatsu T."/>
            <person name="Mizushima-Sugano J."/>
            <person name="Satoh T."/>
            <person name="Shirai Y."/>
            <person name="Takahashi Y."/>
            <person name="Nakagawa K."/>
            <person name="Okumura K."/>
            <person name="Nagase T."/>
            <person name="Nomura N."/>
            <person name="Kikuchi H."/>
            <person name="Masuho Y."/>
            <person name="Yamashita R."/>
            <person name="Nakai K."/>
            <person name="Yada T."/>
            <person name="Nakamura Y."/>
            <person name="Ohara O."/>
            <person name="Isogai T."/>
            <person name="Sugano S."/>
        </authorList>
    </citation>
    <scope>NUCLEOTIDE SEQUENCE [LARGE SCALE MRNA] OF 159-549</scope>
</reference>
<reference key="5">
    <citation type="journal article" date="1995" name="DNA Cell Biol.">
        <title>Isolation of cDNA clones for 42 different Kruppel-related zinc finger proteins expressed in the human monoblast cell line U-937.</title>
        <authorList>
            <person name="Abrink M."/>
            <person name="Aveskogh M."/>
            <person name="Hellman L."/>
        </authorList>
    </citation>
    <scope>NUCLEOTIDE SEQUENCE [MRNA] OF 350-549</scope>
</reference>
<proteinExistence type="evidence at protein level"/>
<evidence type="ECO:0000255" key="1">
    <source>
        <dbReference type="PROSITE-ProRule" id="PRU00042"/>
    </source>
</evidence>
<evidence type="ECO:0000255" key="2">
    <source>
        <dbReference type="PROSITE-ProRule" id="PRU00119"/>
    </source>
</evidence>
<evidence type="ECO:0000256" key="3">
    <source>
        <dbReference type="SAM" id="MobiDB-lite"/>
    </source>
</evidence>
<evidence type="ECO:0000305" key="4"/>
<comment type="function">
    <text>May be involved in transcriptional regulation.</text>
</comment>
<comment type="interaction">
    <interactant intactId="EBI-7115319">
        <id>Q14584</id>
    </interactant>
    <interactant intactId="EBI-739624">
        <id>Q8NHQ1</id>
        <label>CEP70</label>
    </interactant>
    <organismsDiffer>false</organismsDiffer>
    <experiments>6</experiments>
</comment>
<comment type="interaction">
    <interactant intactId="EBI-7115319">
        <id>Q14584</id>
    </interactant>
    <interactant intactId="EBI-3867333">
        <id>A8MQ03</id>
        <label>CYSRT1</label>
    </interactant>
    <organismsDiffer>false</organismsDiffer>
    <experiments>3</experiments>
</comment>
<comment type="interaction">
    <interactant intactId="EBI-7115319">
        <id>Q14584</id>
    </interactant>
    <interactant intactId="EBI-10171697">
        <id>Q6A162</id>
        <label>KRT40</label>
    </interactant>
    <organismsDiffer>false</organismsDiffer>
    <experiments>5</experiments>
</comment>
<comment type="interaction">
    <interactant intactId="EBI-7115319">
        <id>Q14584</id>
    </interactant>
    <interactant intactId="EBI-10172290">
        <id>P60409</id>
        <label>KRTAP10-7</label>
    </interactant>
    <organismsDiffer>false</organismsDiffer>
    <experiments>5</experiments>
</comment>
<comment type="interaction">
    <interactant intactId="EBI-7115319">
        <id>Q14584</id>
    </interactant>
    <interactant intactId="EBI-10171774">
        <id>P60410</id>
        <label>KRTAP10-8</label>
    </interactant>
    <organismsDiffer>false</organismsDiffer>
    <experiments>3</experiments>
</comment>
<comment type="interaction">
    <interactant intactId="EBI-7115319">
        <id>Q14584</id>
    </interactant>
    <interactant intactId="EBI-3958099">
        <id>P26371</id>
        <label>KRTAP5-9</label>
    </interactant>
    <organismsDiffer>false</organismsDiffer>
    <experiments>3</experiments>
</comment>
<comment type="interaction">
    <interactant intactId="EBI-7115319">
        <id>Q14584</id>
    </interactant>
    <interactant intactId="EBI-724076">
        <id>Q99750</id>
        <label>MDFI</label>
    </interactant>
    <organismsDiffer>false</organismsDiffer>
    <experiments>6</experiments>
</comment>
<comment type="interaction">
    <interactant intactId="EBI-7115319">
        <id>Q14584</id>
    </interactant>
    <interactant intactId="EBI-10172526">
        <id>Q9UJV3-2</id>
        <label>MID2</label>
    </interactant>
    <organismsDiffer>false</organismsDiffer>
    <experiments>3</experiments>
</comment>
<comment type="interaction">
    <interactant intactId="EBI-7115319">
        <id>Q14584</id>
    </interactant>
    <interactant intactId="EBI-11522433">
        <id>Q5JR59-3</id>
        <label>MTUS2</label>
    </interactant>
    <organismsDiffer>false</organismsDiffer>
    <experiments>4</experiments>
</comment>
<comment type="interaction">
    <interactant intactId="EBI-7115319">
        <id>Q14584</id>
    </interactant>
    <interactant intactId="EBI-9116212">
        <id>Q9HD47</id>
        <label>RANGRF</label>
    </interactant>
    <organismsDiffer>false</organismsDiffer>
    <experiments>2</experiments>
</comment>
<comment type="interaction">
    <interactant intactId="EBI-7115319">
        <id>Q14584</id>
    </interactant>
    <interactant intactId="EBI-725997">
        <id>Q8WV44</id>
        <label>TRIM41</label>
    </interactant>
    <organismsDiffer>false</organismsDiffer>
    <experiments>6</experiments>
</comment>
<comment type="subcellular location">
    <subcellularLocation>
        <location evidence="4">Nucleus</location>
    </subcellularLocation>
</comment>
<comment type="similarity">
    <text evidence="4">Belongs to the krueppel C2H2-type zinc-finger protein family.</text>
</comment>
<comment type="sequence caution" evidence="4">
    <conflict type="erroneous termination">
        <sequence resource="EMBL" id="AK027480"/>
    </conflict>
    <text>Truncated C-terminus.</text>
</comment>
<comment type="sequence caution" evidence="4">
    <conflict type="frameshift">
        <sequence resource="EMBL" id="AK027480"/>
    </conflict>
</comment>
<comment type="sequence caution" evidence="4">
    <conflict type="erroneous initiation">
        <sequence resource="EMBL-CDS" id="BAC23104"/>
    </conflict>
</comment>
<organism>
    <name type="scientific">Homo sapiens</name>
    <name type="common">Human</name>
    <dbReference type="NCBI Taxonomy" id="9606"/>
    <lineage>
        <taxon>Eukaryota</taxon>
        <taxon>Metazoa</taxon>
        <taxon>Chordata</taxon>
        <taxon>Craniata</taxon>
        <taxon>Vertebrata</taxon>
        <taxon>Euteleostomi</taxon>
        <taxon>Mammalia</taxon>
        <taxon>Eutheria</taxon>
        <taxon>Euarchontoglires</taxon>
        <taxon>Primates</taxon>
        <taxon>Haplorrhini</taxon>
        <taxon>Catarrhini</taxon>
        <taxon>Hominidae</taxon>
        <taxon>Homo</taxon>
    </lineage>
</organism>
<dbReference type="EMBL" id="AY376240">
    <property type="protein sequence ID" value="AAQ82907.1"/>
    <property type="molecule type" value="mRNA"/>
</dbReference>
<dbReference type="EMBL" id="AB095928">
    <property type="protein sequence ID" value="BAC23104.1"/>
    <property type="status" value="ALT_INIT"/>
    <property type="molecule type" value="mRNA"/>
</dbReference>
<dbReference type="EMBL" id="BC017407">
    <property type="protein sequence ID" value="AAH17407.2"/>
    <property type="molecule type" value="mRNA"/>
</dbReference>
<dbReference type="EMBL" id="BC071628">
    <property type="protein sequence ID" value="AAH71628.1"/>
    <property type="molecule type" value="mRNA"/>
</dbReference>
<dbReference type="EMBL" id="BC112919">
    <property type="protein sequence ID" value="AAI12920.1"/>
    <property type="molecule type" value="mRNA"/>
</dbReference>
<dbReference type="EMBL" id="BC146837">
    <property type="protein sequence ID" value="AAI46838.1"/>
    <property type="molecule type" value="mRNA"/>
</dbReference>
<dbReference type="EMBL" id="BC126255">
    <property type="protein sequence ID" value="AAI26256.1"/>
    <property type="molecule type" value="mRNA"/>
</dbReference>
<dbReference type="EMBL" id="AK027480">
    <property type="status" value="NOT_ANNOTATED_CDS"/>
    <property type="molecule type" value="mRNA"/>
</dbReference>
<dbReference type="EMBL" id="X78924">
    <property type="protein sequence ID" value="CAA55524.1"/>
    <property type="molecule type" value="mRNA"/>
</dbReference>
<dbReference type="CCDS" id="CCDS12213.1"/>
<dbReference type="PIR" id="S47067">
    <property type="entry name" value="S47067"/>
</dbReference>
<dbReference type="RefSeq" id="NP_001258243.1">
    <property type="nucleotide sequence ID" value="NM_001271314.2"/>
</dbReference>
<dbReference type="RefSeq" id="NP_001357305.1">
    <property type="nucleotide sequence ID" value="NM_001370376.1"/>
</dbReference>
<dbReference type="RefSeq" id="NP_001357306.1">
    <property type="nucleotide sequence ID" value="NM_001370377.1"/>
</dbReference>
<dbReference type="RefSeq" id="NP_001357307.1">
    <property type="nucleotide sequence ID" value="NM_001370378.1"/>
</dbReference>
<dbReference type="RefSeq" id="NP_001357308.1">
    <property type="nucleotide sequence ID" value="NM_001370379.1"/>
</dbReference>
<dbReference type="RefSeq" id="NP_001357309.1">
    <property type="nucleotide sequence ID" value="NM_001370380.1"/>
</dbReference>
<dbReference type="RefSeq" id="NP_001357310.1">
    <property type="nucleotide sequence ID" value="NM_001370381.1"/>
</dbReference>
<dbReference type="RefSeq" id="NP_001357311.1">
    <property type="nucleotide sequence ID" value="NM_001370382.1"/>
</dbReference>
<dbReference type="RefSeq" id="NP_001357312.1">
    <property type="nucleotide sequence ID" value="NM_001370383.1"/>
</dbReference>
<dbReference type="RefSeq" id="NP_001357315.1">
    <property type="nucleotide sequence ID" value="NM_001370386.1"/>
</dbReference>
<dbReference type="RefSeq" id="NP_001357316.1">
    <property type="nucleotide sequence ID" value="NM_001370387.1"/>
</dbReference>
<dbReference type="RefSeq" id="NP_001357317.1">
    <property type="nucleotide sequence ID" value="NM_001370388.1"/>
</dbReference>
<dbReference type="RefSeq" id="NP_001357318.1">
    <property type="nucleotide sequence ID" value="NM_001370389.1"/>
</dbReference>
<dbReference type="RefSeq" id="NP_001357319.1">
    <property type="nucleotide sequence ID" value="NM_001370390.1"/>
</dbReference>
<dbReference type="RefSeq" id="NP_001357320.1">
    <property type="nucleotide sequence ID" value="NM_001370391.1"/>
</dbReference>
<dbReference type="RefSeq" id="NP_001357321.1">
    <property type="nucleotide sequence ID" value="NM_001370392.1"/>
</dbReference>
<dbReference type="RefSeq" id="NP_001357322.1">
    <property type="nucleotide sequence ID" value="NM_001370393.1"/>
</dbReference>
<dbReference type="RefSeq" id="NP_001357323.1">
    <property type="nucleotide sequence ID" value="NM_001370394.1"/>
</dbReference>
<dbReference type="RefSeq" id="NP_001357324.1">
    <property type="nucleotide sequence ID" value="NM_001370395.1"/>
</dbReference>
<dbReference type="RefSeq" id="NP_001357325.1">
    <property type="nucleotide sequence ID" value="NM_001370396.1"/>
</dbReference>
<dbReference type="RefSeq" id="NP_001357326.1">
    <property type="nucleotide sequence ID" value="NM_001370397.1"/>
</dbReference>
<dbReference type="RefSeq" id="NP_001357327.1">
    <property type="nucleotide sequence ID" value="NM_001370398.1"/>
</dbReference>
<dbReference type="RefSeq" id="NP_001357328.1">
    <property type="nucleotide sequence ID" value="NM_001370399.1"/>
</dbReference>
<dbReference type="RefSeq" id="NP_001357329.1">
    <property type="nucleotide sequence ID" value="NM_001370400.1"/>
</dbReference>
<dbReference type="RefSeq" id="NP_006622.2">
    <property type="nucleotide sequence ID" value="NM_006631.3"/>
</dbReference>
<dbReference type="RefSeq" id="XP_005259773.1">
    <property type="nucleotide sequence ID" value="XM_005259716.3"/>
</dbReference>
<dbReference type="RefSeq" id="XP_006722690.1">
    <property type="nucleotide sequence ID" value="XM_006722627.2"/>
</dbReference>
<dbReference type="RefSeq" id="XP_006722693.1">
    <property type="nucleotide sequence ID" value="XM_006722630.2"/>
</dbReference>
<dbReference type="RefSeq" id="XP_011525949.1">
    <property type="nucleotide sequence ID" value="XM_011527647.1"/>
</dbReference>
<dbReference type="RefSeq" id="XP_011525950.1">
    <property type="nucleotide sequence ID" value="XM_011527648.1"/>
</dbReference>
<dbReference type="RefSeq" id="XP_011525952.1">
    <property type="nucleotide sequence ID" value="XM_011527650.1"/>
</dbReference>
<dbReference type="RefSeq" id="XP_016881645.1">
    <property type="nucleotide sequence ID" value="XM_017026156.1"/>
</dbReference>
<dbReference type="RefSeq" id="XP_016881646.1">
    <property type="nucleotide sequence ID" value="XM_017026157.1"/>
</dbReference>
<dbReference type="RefSeq" id="XP_016881647.1">
    <property type="nucleotide sequence ID" value="XM_017026158.1"/>
</dbReference>
<dbReference type="RefSeq" id="XP_016881648.1">
    <property type="nucleotide sequence ID" value="XM_017026159.1"/>
</dbReference>
<dbReference type="RefSeq" id="XP_016881649.1">
    <property type="nucleotide sequence ID" value="XM_017026160.1"/>
</dbReference>
<dbReference type="RefSeq" id="XP_016881650.1">
    <property type="nucleotide sequence ID" value="XM_017026161.1"/>
</dbReference>
<dbReference type="RefSeq" id="XP_016881651.1">
    <property type="nucleotide sequence ID" value="XM_017026162.1"/>
</dbReference>
<dbReference type="RefSeq" id="XP_016881652.1">
    <property type="nucleotide sequence ID" value="XM_017026163.1"/>
</dbReference>
<dbReference type="RefSeq" id="XP_016881653.1">
    <property type="nucleotide sequence ID" value="XM_017026164.1"/>
</dbReference>
<dbReference type="RefSeq" id="XP_016881654.1">
    <property type="nucleotide sequence ID" value="XM_017026165.1"/>
</dbReference>
<dbReference type="RefSeq" id="XP_016881655.1">
    <property type="nucleotide sequence ID" value="XM_017026166.1"/>
</dbReference>
<dbReference type="RefSeq" id="XP_016881656.1">
    <property type="nucleotide sequence ID" value="XM_017026167.1"/>
</dbReference>
<dbReference type="RefSeq" id="XP_047294026.1">
    <property type="nucleotide sequence ID" value="XM_047438070.1"/>
</dbReference>
<dbReference type="RefSeq" id="XP_047294027.1">
    <property type="nucleotide sequence ID" value="XM_047438071.1"/>
</dbReference>
<dbReference type="RefSeq" id="XP_047294028.1">
    <property type="nucleotide sequence ID" value="XM_047438072.1"/>
</dbReference>
<dbReference type="RefSeq" id="XP_047294029.1">
    <property type="nucleotide sequence ID" value="XM_047438073.1"/>
</dbReference>
<dbReference type="RefSeq" id="XP_047294030.1">
    <property type="nucleotide sequence ID" value="XM_047438074.1"/>
</dbReference>
<dbReference type="RefSeq" id="XP_054175535.1">
    <property type="nucleotide sequence ID" value="XM_054319560.1"/>
</dbReference>
<dbReference type="RefSeq" id="XP_054175536.1">
    <property type="nucleotide sequence ID" value="XM_054319561.1"/>
</dbReference>
<dbReference type="RefSeq" id="XP_054175537.1">
    <property type="nucleotide sequence ID" value="XM_054319562.1"/>
</dbReference>
<dbReference type="RefSeq" id="XP_054175538.1">
    <property type="nucleotide sequence ID" value="XM_054319563.1"/>
</dbReference>
<dbReference type="RefSeq" id="XP_054175539.1">
    <property type="nucleotide sequence ID" value="XM_054319564.1"/>
</dbReference>
<dbReference type="RefSeq" id="XP_054175540.1">
    <property type="nucleotide sequence ID" value="XM_054319565.1"/>
</dbReference>
<dbReference type="SMR" id="Q14584"/>
<dbReference type="BioGRID" id="115998">
    <property type="interactions" value="16"/>
</dbReference>
<dbReference type="FunCoup" id="Q14584">
    <property type="interactions" value="44"/>
</dbReference>
<dbReference type="IntAct" id="Q14584">
    <property type="interactions" value="13"/>
</dbReference>
<dbReference type="MINT" id="Q14584"/>
<dbReference type="STRING" id="9606.ENSP00000498589"/>
<dbReference type="GlyGen" id="Q14584">
    <property type="glycosylation" value="2 sites, 1 O-linked glycan (2 sites)"/>
</dbReference>
<dbReference type="iPTMnet" id="Q14584"/>
<dbReference type="PhosphoSitePlus" id="Q14584"/>
<dbReference type="BioMuta" id="ZNF266"/>
<dbReference type="DMDM" id="85681859"/>
<dbReference type="jPOST" id="Q14584"/>
<dbReference type="MassIVE" id="Q14584"/>
<dbReference type="PaxDb" id="9606-ENSP00000466714"/>
<dbReference type="PeptideAtlas" id="Q14584"/>
<dbReference type="ProteomicsDB" id="60057"/>
<dbReference type="Antibodypedia" id="12591">
    <property type="antibodies" value="170 antibodies from 23 providers"/>
</dbReference>
<dbReference type="DNASU" id="10781"/>
<dbReference type="Ensembl" id="ENST00000588221.5">
    <property type="protein sequence ID" value="ENSP00000468491.1"/>
    <property type="gene ID" value="ENSG00000174652.20"/>
</dbReference>
<dbReference type="Ensembl" id="ENST00000588933.5">
    <property type="protein sequence ID" value="ENSP00000467151.1"/>
    <property type="gene ID" value="ENSG00000174652.20"/>
</dbReference>
<dbReference type="Ensembl" id="ENST00000590306.5">
    <property type="protein sequence ID" value="ENSP00000467315.1"/>
    <property type="gene ID" value="ENSG00000174652.20"/>
</dbReference>
<dbReference type="Ensembl" id="ENST00000592292.5">
    <property type="protein sequence ID" value="ENSP00000467403.1"/>
    <property type="gene ID" value="ENSG00000174652.20"/>
</dbReference>
<dbReference type="Ensembl" id="ENST00000651268.1">
    <property type="protein sequence ID" value="ENSP00000498589.1"/>
    <property type="gene ID" value="ENSG00000174652.20"/>
</dbReference>
<dbReference type="GeneID" id="10781"/>
<dbReference type="KEGG" id="hsa:10781"/>
<dbReference type="UCSC" id="uc002mlo.5">
    <property type="organism name" value="human"/>
</dbReference>
<dbReference type="AGR" id="HGNC:13059"/>
<dbReference type="CTD" id="10781"/>
<dbReference type="DisGeNET" id="10781"/>
<dbReference type="GeneCards" id="ZNF266"/>
<dbReference type="HGNC" id="HGNC:13059">
    <property type="gene designation" value="ZNF266"/>
</dbReference>
<dbReference type="HPA" id="ENSG00000174652">
    <property type="expression patterns" value="Low tissue specificity"/>
</dbReference>
<dbReference type="MIM" id="604751">
    <property type="type" value="gene"/>
</dbReference>
<dbReference type="neXtProt" id="NX_Q14584"/>
<dbReference type="OpenTargets" id="ENSG00000174652"/>
<dbReference type="PharmGKB" id="PA37637"/>
<dbReference type="VEuPathDB" id="HostDB:ENSG00000174652"/>
<dbReference type="eggNOG" id="KOG1721">
    <property type="taxonomic scope" value="Eukaryota"/>
</dbReference>
<dbReference type="GeneTree" id="ENSGT00940000162380"/>
<dbReference type="HOGENOM" id="CLU_002678_44_5_1"/>
<dbReference type="InParanoid" id="Q14584"/>
<dbReference type="OMA" id="EDPFECK"/>
<dbReference type="OrthoDB" id="6077919at2759"/>
<dbReference type="PAN-GO" id="Q14584">
    <property type="GO annotations" value="3 GO annotations based on evolutionary models"/>
</dbReference>
<dbReference type="PhylomeDB" id="Q14584"/>
<dbReference type="TreeFam" id="TF342172"/>
<dbReference type="PathwayCommons" id="Q14584"/>
<dbReference type="Reactome" id="R-HSA-212436">
    <property type="pathway name" value="Generic Transcription Pathway"/>
</dbReference>
<dbReference type="SignaLink" id="Q14584"/>
<dbReference type="BioGRID-ORCS" id="10781">
    <property type="hits" value="5 hits in 1177 CRISPR screens"/>
</dbReference>
<dbReference type="ChiTaRS" id="ZNF266">
    <property type="organism name" value="human"/>
</dbReference>
<dbReference type="GenomeRNAi" id="10781"/>
<dbReference type="Pharos" id="Q14584">
    <property type="development level" value="Tbio"/>
</dbReference>
<dbReference type="PRO" id="PR:Q14584"/>
<dbReference type="Proteomes" id="UP000005640">
    <property type="component" value="Chromosome 19"/>
</dbReference>
<dbReference type="RNAct" id="Q14584">
    <property type="molecule type" value="protein"/>
</dbReference>
<dbReference type="Bgee" id="ENSG00000174652">
    <property type="expression patterns" value="Expressed in granulocyte and 201 other cell types or tissues"/>
</dbReference>
<dbReference type="ExpressionAtlas" id="Q14584">
    <property type="expression patterns" value="baseline and differential"/>
</dbReference>
<dbReference type="GO" id="GO:0005634">
    <property type="term" value="C:nucleus"/>
    <property type="evidence" value="ECO:0000318"/>
    <property type="project" value="GO_Central"/>
</dbReference>
<dbReference type="GO" id="GO:0000981">
    <property type="term" value="F:DNA-binding transcription factor activity, RNA polymerase II-specific"/>
    <property type="evidence" value="ECO:0000318"/>
    <property type="project" value="GO_Central"/>
</dbReference>
<dbReference type="GO" id="GO:0000977">
    <property type="term" value="F:RNA polymerase II transcription regulatory region sequence-specific DNA binding"/>
    <property type="evidence" value="ECO:0000318"/>
    <property type="project" value="GO_Central"/>
</dbReference>
<dbReference type="GO" id="GO:0008270">
    <property type="term" value="F:zinc ion binding"/>
    <property type="evidence" value="ECO:0007669"/>
    <property type="project" value="UniProtKB-KW"/>
</dbReference>
<dbReference type="GO" id="GO:0006357">
    <property type="term" value="P:regulation of transcription by RNA polymerase II"/>
    <property type="evidence" value="ECO:0000318"/>
    <property type="project" value="GO_Central"/>
</dbReference>
<dbReference type="FunFam" id="3.30.160.60:FF:001506">
    <property type="entry name" value="Zinc finger protein"/>
    <property type="match status" value="1"/>
</dbReference>
<dbReference type="FunFam" id="3.30.160.60:FF:000650">
    <property type="entry name" value="Zinc finger protein 197"/>
    <property type="match status" value="1"/>
</dbReference>
<dbReference type="FunFam" id="3.30.160.60:FF:000206">
    <property type="entry name" value="zinc finger protein 202 isoform X1"/>
    <property type="match status" value="1"/>
</dbReference>
<dbReference type="FunFam" id="3.30.160.60:FF:000240">
    <property type="entry name" value="Zinc finger protein 250"/>
    <property type="match status" value="1"/>
</dbReference>
<dbReference type="FunFam" id="3.30.160.60:FF:000522">
    <property type="entry name" value="zinc finger protein 285"/>
    <property type="match status" value="1"/>
</dbReference>
<dbReference type="FunFam" id="3.30.160.60:FF:000184">
    <property type="entry name" value="Zinc finger protein 333"/>
    <property type="match status" value="1"/>
</dbReference>
<dbReference type="FunFam" id="3.30.160.60:FF:001498">
    <property type="entry name" value="Zinc finger protein 404"/>
    <property type="match status" value="1"/>
</dbReference>
<dbReference type="FunFam" id="3.30.160.60:FF:002254">
    <property type="entry name" value="Zinc finger protein 540"/>
    <property type="match status" value="3"/>
</dbReference>
<dbReference type="FunFam" id="3.30.160.60:FF:001465">
    <property type="entry name" value="Zinc finger protein 560"/>
    <property type="match status" value="1"/>
</dbReference>
<dbReference type="FunFam" id="3.30.160.60:FF:001157">
    <property type="entry name" value="Zinc finger protein 793"/>
    <property type="match status" value="1"/>
</dbReference>
<dbReference type="FunFam" id="3.30.160.60:FF:001933">
    <property type="entry name" value="Zinc finger protein 870"/>
    <property type="match status" value="1"/>
</dbReference>
<dbReference type="Gene3D" id="3.30.160.60">
    <property type="entry name" value="Classic Zinc Finger"/>
    <property type="match status" value="14"/>
</dbReference>
<dbReference type="InterPro" id="IPR050752">
    <property type="entry name" value="C2H2-ZF_domain"/>
</dbReference>
<dbReference type="InterPro" id="IPR001909">
    <property type="entry name" value="KRAB"/>
</dbReference>
<dbReference type="InterPro" id="IPR036236">
    <property type="entry name" value="Znf_C2H2_sf"/>
</dbReference>
<dbReference type="InterPro" id="IPR013087">
    <property type="entry name" value="Znf_C2H2_type"/>
</dbReference>
<dbReference type="PANTHER" id="PTHR24384">
    <property type="entry name" value="FINGER PUTATIVE TRANSCRIPTION FACTOR FAMILY-RELATED"/>
    <property type="match status" value="1"/>
</dbReference>
<dbReference type="PANTHER" id="PTHR24384:SF247">
    <property type="entry name" value="ZINC FINGER PROTEIN 977"/>
    <property type="match status" value="1"/>
</dbReference>
<dbReference type="Pfam" id="PF00096">
    <property type="entry name" value="zf-C2H2"/>
    <property type="match status" value="12"/>
</dbReference>
<dbReference type="SMART" id="SM00614">
    <property type="entry name" value="ZnF_BED"/>
    <property type="match status" value="2"/>
</dbReference>
<dbReference type="SMART" id="SM00355">
    <property type="entry name" value="ZnF_C2H2"/>
    <property type="match status" value="13"/>
</dbReference>
<dbReference type="SUPFAM" id="SSF57667">
    <property type="entry name" value="beta-beta-alpha zinc fingers"/>
    <property type="match status" value="8"/>
</dbReference>
<dbReference type="PROSITE" id="PS50805">
    <property type="entry name" value="KRAB"/>
    <property type="match status" value="1"/>
</dbReference>
<dbReference type="PROSITE" id="PS00028">
    <property type="entry name" value="ZINC_FINGER_C2H2_1"/>
    <property type="match status" value="12"/>
</dbReference>
<dbReference type="PROSITE" id="PS50157">
    <property type="entry name" value="ZINC_FINGER_C2H2_2"/>
    <property type="match status" value="14"/>
</dbReference>
<gene>
    <name type="primary">ZNF266</name>
    <name type="synonym">KIAA2007</name>
</gene>
<accession>Q14584</accession>
<accession>A0AV90</accession>
<accession>A4FU85</accession>
<accession>Q6IQ07</accession>
<accession>Q6U8A5</accession>
<accession>Q8IVG3</accession>
<accession>Q8WVX1</accession>
<accession>Q96SX9</accession>
<keyword id="KW-0238">DNA-binding</keyword>
<keyword id="KW-0479">Metal-binding</keyword>
<keyword id="KW-0539">Nucleus</keyword>
<keyword id="KW-1267">Proteomics identification</keyword>
<keyword id="KW-1185">Reference proteome</keyword>
<keyword id="KW-0677">Repeat</keyword>
<keyword id="KW-0804">Transcription</keyword>
<keyword id="KW-0805">Transcription regulation</keyword>
<keyword id="KW-0862">Zinc</keyword>
<keyword id="KW-0863">Zinc-finger</keyword>
<sequence length="549" mass="62116">MLENYKNLATVGYQLFKPSLISWLEQEESRTVQRGDFQASEWKVQLKTKELALQQDVLGEPTSSGIQMIGSHNGGEVSDVKQCGDVSSEHSCLKTHVRTQNSENTFECYLYGVDFLTLHKKTSTGEQRSVFSQCGKAFSLNPDVVCQRTCTGEKAFDCSDSGKSFINHSHLQGHLRTHNGESLHEWKECGRGFIHSTDLAVRIQTHRSEKPYKCKECGKGFRYSAYLNIHMGTHTGDNPYECKECGKAFTRSCQLTQHRKTHTGEKPYKCKDCGRAFTVSSCLSQHMKIHVGEKPYECKECGIAFTRSSQLTEHLKTHTAKDPFECKICGKSFRNSSCLSDHFRIHTGIKPYKCKDCGKAFTQNSDLTKHARTHSGERPYECKECGKAFARSSRLSEHTRTHTGEKPFECVKCGKAFAISSNLSGHLRIHTGEKPFECLECGKAFTHSSSLNNHMRTHSAKKPFTCMECGKAFKFPTCVNLHMRIHTGEKPYKCKQCGKSFSYSNSFQLHERTHTGEKPYECKECGKAFSSSSSFRNHERRHADERLSA</sequence>
<protein>
    <recommendedName>
        <fullName>Zinc finger protein 266</fullName>
    </recommendedName>
    <alternativeName>
        <fullName>Zinc finger protein HZF1</fullName>
    </alternativeName>
</protein>
<feature type="chain" id="PRO_0000047493" description="Zinc finger protein 266">
    <location>
        <begin position="1"/>
        <end position="549"/>
    </location>
</feature>
<feature type="domain" description="KRAB" evidence="2">
    <location>
        <begin position="1"/>
        <end position="42"/>
    </location>
</feature>
<feature type="zinc finger region" description="C2H2-type 1; degenerate" evidence="1">
    <location>
        <begin position="156"/>
        <end position="178"/>
    </location>
</feature>
<feature type="zinc finger region" description="C2H2-type 2; degenerate" evidence="1">
    <location>
        <begin position="184"/>
        <end position="206"/>
    </location>
</feature>
<feature type="zinc finger region" description="C2H2-type 3" evidence="1">
    <location>
        <begin position="212"/>
        <end position="234"/>
    </location>
</feature>
<feature type="zinc finger region" description="C2H2-type 4" evidence="1">
    <location>
        <begin position="240"/>
        <end position="262"/>
    </location>
</feature>
<feature type="zinc finger region" description="C2H2-type 5" evidence="1">
    <location>
        <begin position="268"/>
        <end position="290"/>
    </location>
</feature>
<feature type="zinc finger region" description="C2H2-type 6" evidence="1">
    <location>
        <begin position="296"/>
        <end position="318"/>
    </location>
</feature>
<feature type="zinc finger region" description="C2H2-type 7" evidence="1">
    <location>
        <begin position="324"/>
        <end position="346"/>
    </location>
</feature>
<feature type="zinc finger region" description="C2H2-type 8" evidence="1">
    <location>
        <begin position="352"/>
        <end position="374"/>
    </location>
</feature>
<feature type="zinc finger region" description="C2H2-type 9" evidence="1">
    <location>
        <begin position="380"/>
        <end position="402"/>
    </location>
</feature>
<feature type="zinc finger region" description="C2H2-type 10" evidence="1">
    <location>
        <begin position="408"/>
        <end position="430"/>
    </location>
</feature>
<feature type="zinc finger region" description="C2H2-type 11" evidence="1">
    <location>
        <begin position="436"/>
        <end position="458"/>
    </location>
</feature>
<feature type="zinc finger region" description="C2H2-type 12" evidence="1">
    <location>
        <begin position="464"/>
        <end position="486"/>
    </location>
</feature>
<feature type="zinc finger region" description="C2H2-type 13" evidence="1">
    <location>
        <begin position="492"/>
        <end position="514"/>
    </location>
</feature>
<feature type="zinc finger region" description="C2H2-type 14" evidence="1">
    <location>
        <begin position="520"/>
        <end position="542"/>
    </location>
</feature>
<feature type="region of interest" description="Disordered" evidence="3">
    <location>
        <begin position="530"/>
        <end position="549"/>
    </location>
</feature>
<feature type="sequence variant" id="VAR_014828" description="In dbSNP:rs10515.">
    <original>P</original>
    <variation>L</variation>
    <location>
        <position position="519"/>
    </location>
</feature>
<feature type="sequence conflict" description="In Ref. 3; AAH17407." evidence="4" ref="3">
    <original>Q</original>
    <variation>E</variation>
    <location>
        <position position="257"/>
    </location>
</feature>
<name>ZN266_HUMAN</name>